<feature type="chain" id="PRO_1000057608" description="S-ribosylhomocysteine lyase">
    <location>
        <begin position="1"/>
        <end position="158"/>
    </location>
</feature>
<feature type="binding site" evidence="1">
    <location>
        <position position="54"/>
    </location>
    <ligand>
        <name>Fe cation</name>
        <dbReference type="ChEBI" id="CHEBI:24875"/>
    </ligand>
</feature>
<feature type="binding site" evidence="1">
    <location>
        <position position="58"/>
    </location>
    <ligand>
        <name>Fe cation</name>
        <dbReference type="ChEBI" id="CHEBI:24875"/>
    </ligand>
</feature>
<feature type="binding site" evidence="1">
    <location>
        <position position="124"/>
    </location>
    <ligand>
        <name>Fe cation</name>
        <dbReference type="ChEBI" id="CHEBI:24875"/>
    </ligand>
</feature>
<proteinExistence type="inferred from homology"/>
<dbReference type="EC" id="4.4.1.21" evidence="1"/>
<dbReference type="EMBL" id="CP000705">
    <property type="protein sequence ID" value="ABQ83827.1"/>
    <property type="molecule type" value="Genomic_DNA"/>
</dbReference>
<dbReference type="RefSeq" id="WP_003668959.1">
    <property type="nucleotide sequence ID" value="NC_009513.1"/>
</dbReference>
<dbReference type="SMR" id="A5VLV3"/>
<dbReference type="STRING" id="557436.Lreu_1586"/>
<dbReference type="KEGG" id="lre:Lreu_1586"/>
<dbReference type="PATRIC" id="fig|557436.17.peg.1622"/>
<dbReference type="eggNOG" id="COG1854">
    <property type="taxonomic scope" value="Bacteria"/>
</dbReference>
<dbReference type="HOGENOM" id="CLU_107531_2_1_9"/>
<dbReference type="Proteomes" id="UP000001991">
    <property type="component" value="Chromosome"/>
</dbReference>
<dbReference type="GO" id="GO:0005506">
    <property type="term" value="F:iron ion binding"/>
    <property type="evidence" value="ECO:0007669"/>
    <property type="project" value="InterPro"/>
</dbReference>
<dbReference type="GO" id="GO:0043768">
    <property type="term" value="F:S-ribosylhomocysteine lyase activity"/>
    <property type="evidence" value="ECO:0007669"/>
    <property type="project" value="UniProtKB-UniRule"/>
</dbReference>
<dbReference type="GO" id="GO:0009372">
    <property type="term" value="P:quorum sensing"/>
    <property type="evidence" value="ECO:0007669"/>
    <property type="project" value="UniProtKB-UniRule"/>
</dbReference>
<dbReference type="Gene3D" id="3.30.1360.80">
    <property type="entry name" value="S-ribosylhomocysteinase (LuxS)"/>
    <property type="match status" value="1"/>
</dbReference>
<dbReference type="HAMAP" id="MF_00091">
    <property type="entry name" value="LuxS"/>
    <property type="match status" value="1"/>
</dbReference>
<dbReference type="InterPro" id="IPR037005">
    <property type="entry name" value="LuxS_sf"/>
</dbReference>
<dbReference type="InterPro" id="IPR011249">
    <property type="entry name" value="Metalloenz_LuxS/M16"/>
</dbReference>
<dbReference type="InterPro" id="IPR003815">
    <property type="entry name" value="S-ribosylhomocysteinase"/>
</dbReference>
<dbReference type="NCBIfam" id="NF002606">
    <property type="entry name" value="PRK02260.2-4"/>
    <property type="match status" value="1"/>
</dbReference>
<dbReference type="NCBIfam" id="NF002608">
    <property type="entry name" value="PRK02260.3-1"/>
    <property type="match status" value="1"/>
</dbReference>
<dbReference type="PANTHER" id="PTHR35799">
    <property type="entry name" value="S-RIBOSYLHOMOCYSTEINE LYASE"/>
    <property type="match status" value="1"/>
</dbReference>
<dbReference type="PANTHER" id="PTHR35799:SF1">
    <property type="entry name" value="S-RIBOSYLHOMOCYSTEINE LYASE"/>
    <property type="match status" value="1"/>
</dbReference>
<dbReference type="Pfam" id="PF02664">
    <property type="entry name" value="LuxS"/>
    <property type="match status" value="1"/>
</dbReference>
<dbReference type="PIRSF" id="PIRSF006160">
    <property type="entry name" value="AI2"/>
    <property type="match status" value="1"/>
</dbReference>
<dbReference type="PRINTS" id="PR01487">
    <property type="entry name" value="LUXSPROTEIN"/>
</dbReference>
<dbReference type="SUPFAM" id="SSF63411">
    <property type="entry name" value="LuxS/MPP-like metallohydrolase"/>
    <property type="match status" value="1"/>
</dbReference>
<comment type="function">
    <text evidence="1">Involved in the synthesis of autoinducer 2 (AI-2) which is secreted by bacteria and is used to communicate both the cell density and the metabolic potential of the environment. The regulation of gene expression in response to changes in cell density is called quorum sensing. Catalyzes the transformation of S-ribosylhomocysteine (RHC) to homocysteine (HC) and 4,5-dihydroxy-2,3-pentadione (DPD).</text>
</comment>
<comment type="catalytic activity">
    <reaction evidence="1">
        <text>S-(5-deoxy-D-ribos-5-yl)-L-homocysteine = (S)-4,5-dihydroxypentane-2,3-dione + L-homocysteine</text>
        <dbReference type="Rhea" id="RHEA:17753"/>
        <dbReference type="ChEBI" id="CHEBI:29484"/>
        <dbReference type="ChEBI" id="CHEBI:58195"/>
        <dbReference type="ChEBI" id="CHEBI:58199"/>
        <dbReference type="EC" id="4.4.1.21"/>
    </reaction>
</comment>
<comment type="cofactor">
    <cofactor evidence="1">
        <name>Fe cation</name>
        <dbReference type="ChEBI" id="CHEBI:24875"/>
    </cofactor>
    <text evidence="1">Binds 1 Fe cation per subunit.</text>
</comment>
<comment type="subunit">
    <text evidence="1">Homodimer.</text>
</comment>
<comment type="similarity">
    <text evidence="1">Belongs to the LuxS family.</text>
</comment>
<keyword id="KW-0071">Autoinducer synthesis</keyword>
<keyword id="KW-0408">Iron</keyword>
<keyword id="KW-0456">Lyase</keyword>
<keyword id="KW-0479">Metal-binding</keyword>
<keyword id="KW-0673">Quorum sensing</keyword>
<keyword id="KW-1185">Reference proteome</keyword>
<sequence length="158" mass="17695">MAKVESFTLDHTKVKAPYVRLITVEEGPKGDKISNYDLRLVQPNENAIPTAGLHTIEHLLAGLLRDRLGGVIDCSPFGCRTGFHLITWGEHSTTEVAKALKSSLEEIAYKTKWEDVQGTTIESCGNYRDHSLFSAKEWSKKILDEGISDKPFERHVVD</sequence>
<accession>A5VLV3</accession>
<protein>
    <recommendedName>
        <fullName evidence="1">S-ribosylhomocysteine lyase</fullName>
        <ecNumber evidence="1">4.4.1.21</ecNumber>
    </recommendedName>
    <alternativeName>
        <fullName evidence="1">AI-2 synthesis protein</fullName>
    </alternativeName>
    <alternativeName>
        <fullName evidence="1">Autoinducer-2 production protein LuxS</fullName>
    </alternativeName>
</protein>
<reference key="1">
    <citation type="journal article" date="2011" name="PLoS Genet.">
        <title>The evolution of host specialization in the vertebrate gut symbiont Lactobacillus reuteri.</title>
        <authorList>
            <person name="Frese S.A."/>
            <person name="Benson A.K."/>
            <person name="Tannock G.W."/>
            <person name="Loach D.M."/>
            <person name="Kim J."/>
            <person name="Zhang M."/>
            <person name="Oh P.L."/>
            <person name="Heng N.C."/>
            <person name="Patil P.B."/>
            <person name="Juge N."/>
            <person name="Mackenzie D.A."/>
            <person name="Pearson B.M."/>
            <person name="Lapidus A."/>
            <person name="Dalin E."/>
            <person name="Tice H."/>
            <person name="Goltsman E."/>
            <person name="Land M."/>
            <person name="Hauser L."/>
            <person name="Ivanova N."/>
            <person name="Kyrpides N.C."/>
            <person name="Walter J."/>
        </authorList>
    </citation>
    <scope>NUCLEOTIDE SEQUENCE [LARGE SCALE GENOMIC DNA]</scope>
    <source>
        <strain>DSM 20016</strain>
    </source>
</reference>
<gene>
    <name evidence="1" type="primary">luxS</name>
    <name type="ordered locus">Lreu_1586</name>
</gene>
<evidence type="ECO:0000255" key="1">
    <source>
        <dbReference type="HAMAP-Rule" id="MF_00091"/>
    </source>
</evidence>
<organism>
    <name type="scientific">Limosilactobacillus reuteri (strain DSM 20016)</name>
    <name type="common">Lactobacillus reuteri</name>
    <dbReference type="NCBI Taxonomy" id="557436"/>
    <lineage>
        <taxon>Bacteria</taxon>
        <taxon>Bacillati</taxon>
        <taxon>Bacillota</taxon>
        <taxon>Bacilli</taxon>
        <taxon>Lactobacillales</taxon>
        <taxon>Lactobacillaceae</taxon>
        <taxon>Limosilactobacillus</taxon>
    </lineage>
</organism>
<name>LUXS_LIMRD</name>